<feature type="chain" id="PRO_0000157910" description="Succinyl-CoA:3-ketoacid coenzyme A transferase subunit A">
    <location>
        <begin position="1"/>
        <end position="232"/>
    </location>
</feature>
<feature type="binding site" evidence="1">
    <location>
        <begin position="24"/>
        <end position="30"/>
    </location>
    <ligand>
        <name>CoA</name>
        <dbReference type="ChEBI" id="CHEBI:57287"/>
    </ligand>
</feature>
<accession>Q9ZLE3</accession>
<dbReference type="EC" id="2.8.3.5"/>
<dbReference type="EMBL" id="AE001439">
    <property type="protein sequence ID" value="AAD06212.1"/>
    <property type="molecule type" value="Genomic_DNA"/>
</dbReference>
<dbReference type="PIR" id="C71908">
    <property type="entry name" value="C71908"/>
</dbReference>
<dbReference type="RefSeq" id="WP_001045176.1">
    <property type="nucleotide sequence ID" value="NZ_CP011330.1"/>
</dbReference>
<dbReference type="SMR" id="Q9ZLE3"/>
<dbReference type="IntAct" id="Q9ZLE3">
    <property type="interactions" value="1"/>
</dbReference>
<dbReference type="KEGG" id="hpj:jhp_0637"/>
<dbReference type="PATRIC" id="fig|85963.30.peg.347"/>
<dbReference type="eggNOG" id="COG1788">
    <property type="taxonomic scope" value="Bacteria"/>
</dbReference>
<dbReference type="Proteomes" id="UP000000804">
    <property type="component" value="Chromosome"/>
</dbReference>
<dbReference type="GO" id="GO:0008260">
    <property type="term" value="F:succinyl-CoA:3-oxo-acid CoA-transferase activity"/>
    <property type="evidence" value="ECO:0007669"/>
    <property type="project" value="UniProtKB-EC"/>
</dbReference>
<dbReference type="Gene3D" id="3.40.1080.10">
    <property type="entry name" value="Glutaconate Coenzyme A-transferase"/>
    <property type="match status" value="1"/>
</dbReference>
<dbReference type="InterPro" id="IPR012792">
    <property type="entry name" value="3-oxoacid_CoA-transf_A"/>
</dbReference>
<dbReference type="InterPro" id="IPR004165">
    <property type="entry name" value="CoA_trans_fam_I"/>
</dbReference>
<dbReference type="InterPro" id="IPR004163">
    <property type="entry name" value="CoA_transf_BS"/>
</dbReference>
<dbReference type="InterPro" id="IPR037171">
    <property type="entry name" value="NagB/RpiA_transferase-like"/>
</dbReference>
<dbReference type="NCBIfam" id="TIGR02429">
    <property type="entry name" value="pcaI_scoA_fam"/>
    <property type="match status" value="1"/>
</dbReference>
<dbReference type="PANTHER" id="PTHR13707:SF60">
    <property type="entry name" value="ACETATE COA-TRANSFERASE SUBUNIT ALPHA"/>
    <property type="match status" value="1"/>
</dbReference>
<dbReference type="PANTHER" id="PTHR13707">
    <property type="entry name" value="KETOACID-COENZYME A TRANSFERASE"/>
    <property type="match status" value="1"/>
</dbReference>
<dbReference type="Pfam" id="PF01144">
    <property type="entry name" value="CoA_trans"/>
    <property type="match status" value="1"/>
</dbReference>
<dbReference type="SMART" id="SM00882">
    <property type="entry name" value="CoA_trans"/>
    <property type="match status" value="1"/>
</dbReference>
<dbReference type="SUPFAM" id="SSF100950">
    <property type="entry name" value="NagB/RpiA/CoA transferase-like"/>
    <property type="match status" value="1"/>
</dbReference>
<dbReference type="PROSITE" id="PS01273">
    <property type="entry name" value="COA_TRANSF_1"/>
    <property type="match status" value="1"/>
</dbReference>
<gene>
    <name type="primary">scoA</name>
    <name type="ordered locus">jhp_0637</name>
</gene>
<sequence length="232" mass="25325">MNKVITDLDKALSGLKDGDTILVGGFGLCGIPEYAIDYIYKKGIKDLIVVSNNCGVDDFGLGILLEKKQIKKIIASYVGENKIFESQMLNGEIEVVLTPQGTLAENLRAGGAGIPAYYTPTGVGTLIAQGKESREFNGKEYILERAITGDYGLIKAYKSDTLGNLVFRKTARNFNPLCAMAAKICVAEVEEIVPAGELDPDEIHLPGIYVQHIYKGEKFEKRIEKTTTRSAK</sequence>
<proteinExistence type="inferred from homology"/>
<name>SCOA_HELPJ</name>
<evidence type="ECO:0000255" key="1"/>
<evidence type="ECO:0000305" key="2"/>
<keyword id="KW-0808">Transferase</keyword>
<comment type="catalytic activity">
    <reaction>
        <text>a 3-oxo acid + succinyl-CoA = a 3-oxoacyl-CoA + succinate</text>
        <dbReference type="Rhea" id="RHEA:24564"/>
        <dbReference type="ChEBI" id="CHEBI:30031"/>
        <dbReference type="ChEBI" id="CHEBI:35973"/>
        <dbReference type="ChEBI" id="CHEBI:57292"/>
        <dbReference type="ChEBI" id="CHEBI:90726"/>
        <dbReference type="EC" id="2.8.3.5"/>
    </reaction>
</comment>
<comment type="subunit">
    <text>Heterodimer of a subunit A and a subunit B.</text>
</comment>
<comment type="similarity">
    <text evidence="2">Belongs to the 3-oxoacid CoA-transferase subunit A family.</text>
</comment>
<protein>
    <recommendedName>
        <fullName>Succinyl-CoA:3-ketoacid coenzyme A transferase subunit A</fullName>
        <ecNumber>2.8.3.5</ecNumber>
    </recommendedName>
    <alternativeName>
        <fullName>Succinyl-CoA:3-oxoacid CoA-transferase</fullName>
        <shortName>OXCT A</shortName>
    </alternativeName>
</protein>
<organism>
    <name type="scientific">Helicobacter pylori (strain J99 / ATCC 700824)</name>
    <name type="common">Campylobacter pylori J99</name>
    <dbReference type="NCBI Taxonomy" id="85963"/>
    <lineage>
        <taxon>Bacteria</taxon>
        <taxon>Pseudomonadati</taxon>
        <taxon>Campylobacterota</taxon>
        <taxon>Epsilonproteobacteria</taxon>
        <taxon>Campylobacterales</taxon>
        <taxon>Helicobacteraceae</taxon>
        <taxon>Helicobacter</taxon>
    </lineage>
</organism>
<reference key="1">
    <citation type="journal article" date="1999" name="Nature">
        <title>Genomic sequence comparison of two unrelated isolates of the human gastric pathogen Helicobacter pylori.</title>
        <authorList>
            <person name="Alm R.A."/>
            <person name="Ling L.-S.L."/>
            <person name="Moir D.T."/>
            <person name="King B.L."/>
            <person name="Brown E.D."/>
            <person name="Doig P.C."/>
            <person name="Smith D.R."/>
            <person name="Noonan B."/>
            <person name="Guild B.C."/>
            <person name="deJonge B.L."/>
            <person name="Carmel G."/>
            <person name="Tummino P.J."/>
            <person name="Caruso A."/>
            <person name="Uria-Nickelsen M."/>
            <person name="Mills D.M."/>
            <person name="Ives C."/>
            <person name="Gibson R."/>
            <person name="Merberg D."/>
            <person name="Mills S.D."/>
            <person name="Jiang Q."/>
            <person name="Taylor D.E."/>
            <person name="Vovis G.F."/>
            <person name="Trust T.J."/>
        </authorList>
    </citation>
    <scope>NUCLEOTIDE SEQUENCE [LARGE SCALE GENOMIC DNA]</scope>
    <source>
        <strain>J99 / ATCC 700824</strain>
    </source>
</reference>